<name>SYDND_RHOE4</name>
<evidence type="ECO:0000255" key="1">
    <source>
        <dbReference type="HAMAP-Rule" id="MF_00044"/>
    </source>
</evidence>
<evidence type="ECO:0000256" key="2">
    <source>
        <dbReference type="SAM" id="MobiDB-lite"/>
    </source>
</evidence>
<sequence length="602" mass="66287">MLRTHLAGSLRPEQAEQTVTLTGWVARRRDHGGVIFIDLRDASGVAQVVFRAGDVAEQAHRLRAEYCVRVTGTVEVRPEGNQNFEIPTGAIEVNATELEVLNESAPLPFQLDDQVGEEARLKYRYLDLRREGPGSAIRLRSKVSAAARGVLAHHEFVEVETPTLTRSTPEGARDFLVPSRLQPGSFYALPQSPQLFKQLLMVGGIERYYQIARCYRDEDFRADRQPEFTQLDIEMAFVNQDDIILLAEEILTALWKLVGHEIKTPIDRMTYTEAMRRYGSDKPDLRFDIELVECMDFFKDTTFRVFQAEYVGAVVMPGGASQPRKQLDAWQEWAKQRGAKGLAYVLVGEDGTLGGPVAKNLTDAEREGLAAHVGAQPGDCVFFAAGATKPMRALLGAARGEIARKKDLIDPDAWAFVWIVDAPMFEPTADATASGDVALGHSAWTAVHHAFTSPKPEFFDTFDTDPDSALAYAYDIVCNGNEIGGGSIRIHRKDIQERVFKVMGISEEEAQEQFGFLLDAFAFGAPPHGGIAFGWDRITALLAGMDSIREVIAFPKSGGGVDPLTDAPAPISAQQRKESGIDAKPEKKSEDKKSEGDTAEAK</sequence>
<gene>
    <name evidence="1" type="primary">aspS</name>
    <name type="ordered locus">RER_29800</name>
</gene>
<proteinExistence type="inferred from homology"/>
<reference key="1">
    <citation type="submission" date="2005-03" db="EMBL/GenBank/DDBJ databases">
        <title>Comparison of the complete genome sequences of Rhodococcus erythropolis PR4 and Rhodococcus opacus B4.</title>
        <authorList>
            <person name="Takarada H."/>
            <person name="Sekine M."/>
            <person name="Hosoyama A."/>
            <person name="Yamada R."/>
            <person name="Fujisawa T."/>
            <person name="Omata S."/>
            <person name="Shimizu A."/>
            <person name="Tsukatani N."/>
            <person name="Tanikawa S."/>
            <person name="Fujita N."/>
            <person name="Harayama S."/>
        </authorList>
    </citation>
    <scope>NUCLEOTIDE SEQUENCE [LARGE SCALE GENOMIC DNA]</scope>
    <source>
        <strain>PR4 / NBRC 100887</strain>
    </source>
</reference>
<comment type="function">
    <text evidence="1">Aspartyl-tRNA synthetase with relaxed tRNA specificity since it is able to aspartylate not only its cognate tRNA(Asp) but also tRNA(Asn). Reaction proceeds in two steps: L-aspartate is first activated by ATP to form Asp-AMP and then transferred to the acceptor end of tRNA(Asp/Asn).</text>
</comment>
<comment type="catalytic activity">
    <reaction evidence="1">
        <text>tRNA(Asx) + L-aspartate + ATP = L-aspartyl-tRNA(Asx) + AMP + diphosphate</text>
        <dbReference type="Rhea" id="RHEA:18349"/>
        <dbReference type="Rhea" id="RHEA-COMP:9710"/>
        <dbReference type="Rhea" id="RHEA-COMP:9711"/>
        <dbReference type="ChEBI" id="CHEBI:29991"/>
        <dbReference type="ChEBI" id="CHEBI:30616"/>
        <dbReference type="ChEBI" id="CHEBI:33019"/>
        <dbReference type="ChEBI" id="CHEBI:78442"/>
        <dbReference type="ChEBI" id="CHEBI:78516"/>
        <dbReference type="ChEBI" id="CHEBI:456215"/>
        <dbReference type="EC" id="6.1.1.23"/>
    </reaction>
</comment>
<comment type="subunit">
    <text evidence="1">Homodimer.</text>
</comment>
<comment type="subcellular location">
    <subcellularLocation>
        <location evidence="1">Cytoplasm</location>
    </subcellularLocation>
</comment>
<comment type="similarity">
    <text evidence="1">Belongs to the class-II aminoacyl-tRNA synthetase family. Type 1 subfamily.</text>
</comment>
<protein>
    <recommendedName>
        <fullName evidence="1">Aspartate--tRNA(Asp/Asn) ligase</fullName>
        <ecNumber evidence="1">6.1.1.23</ecNumber>
    </recommendedName>
    <alternativeName>
        <fullName evidence="1">Aspartyl-tRNA synthetase</fullName>
        <shortName evidence="1">AspRS</shortName>
    </alternativeName>
    <alternativeName>
        <fullName evidence="1">Non-discriminating aspartyl-tRNA synthetase</fullName>
        <shortName evidence="1">ND-AspRS</shortName>
    </alternativeName>
</protein>
<keyword id="KW-0030">Aminoacyl-tRNA synthetase</keyword>
<keyword id="KW-0067">ATP-binding</keyword>
<keyword id="KW-0963">Cytoplasm</keyword>
<keyword id="KW-0436">Ligase</keyword>
<keyword id="KW-0547">Nucleotide-binding</keyword>
<keyword id="KW-0648">Protein biosynthesis</keyword>
<dbReference type="EC" id="6.1.1.23" evidence="1"/>
<dbReference type="EMBL" id="AP008957">
    <property type="protein sequence ID" value="BAH33688.1"/>
    <property type="molecule type" value="Genomic_DNA"/>
</dbReference>
<dbReference type="RefSeq" id="WP_020907685.1">
    <property type="nucleotide sequence ID" value="NC_012490.1"/>
</dbReference>
<dbReference type="SMR" id="C0ZZA3"/>
<dbReference type="KEGG" id="rer:RER_29800"/>
<dbReference type="eggNOG" id="COG0173">
    <property type="taxonomic scope" value="Bacteria"/>
</dbReference>
<dbReference type="HOGENOM" id="CLU_014330_3_2_11"/>
<dbReference type="Proteomes" id="UP000002204">
    <property type="component" value="Chromosome"/>
</dbReference>
<dbReference type="GO" id="GO:0005737">
    <property type="term" value="C:cytoplasm"/>
    <property type="evidence" value="ECO:0007669"/>
    <property type="project" value="UniProtKB-SubCell"/>
</dbReference>
<dbReference type="GO" id="GO:0004815">
    <property type="term" value="F:aspartate-tRNA ligase activity"/>
    <property type="evidence" value="ECO:0007669"/>
    <property type="project" value="UniProtKB-UniRule"/>
</dbReference>
<dbReference type="GO" id="GO:0050560">
    <property type="term" value="F:aspartate-tRNA(Asn) ligase activity"/>
    <property type="evidence" value="ECO:0007669"/>
    <property type="project" value="UniProtKB-EC"/>
</dbReference>
<dbReference type="GO" id="GO:0005524">
    <property type="term" value="F:ATP binding"/>
    <property type="evidence" value="ECO:0007669"/>
    <property type="project" value="UniProtKB-UniRule"/>
</dbReference>
<dbReference type="GO" id="GO:0003676">
    <property type="term" value="F:nucleic acid binding"/>
    <property type="evidence" value="ECO:0007669"/>
    <property type="project" value="InterPro"/>
</dbReference>
<dbReference type="GO" id="GO:0006422">
    <property type="term" value="P:aspartyl-tRNA aminoacylation"/>
    <property type="evidence" value="ECO:0007669"/>
    <property type="project" value="UniProtKB-UniRule"/>
</dbReference>
<dbReference type="CDD" id="cd00777">
    <property type="entry name" value="AspRS_core"/>
    <property type="match status" value="1"/>
</dbReference>
<dbReference type="CDD" id="cd04317">
    <property type="entry name" value="EcAspRS_like_N"/>
    <property type="match status" value="1"/>
</dbReference>
<dbReference type="Gene3D" id="3.30.930.10">
    <property type="entry name" value="Bira Bifunctional Protein, Domain 2"/>
    <property type="match status" value="1"/>
</dbReference>
<dbReference type="Gene3D" id="3.30.1360.30">
    <property type="entry name" value="GAD-like domain"/>
    <property type="match status" value="1"/>
</dbReference>
<dbReference type="Gene3D" id="2.40.50.140">
    <property type="entry name" value="Nucleic acid-binding proteins"/>
    <property type="match status" value="1"/>
</dbReference>
<dbReference type="HAMAP" id="MF_00044">
    <property type="entry name" value="Asp_tRNA_synth_type1"/>
    <property type="match status" value="1"/>
</dbReference>
<dbReference type="InterPro" id="IPR004364">
    <property type="entry name" value="Aa-tRNA-synt_II"/>
</dbReference>
<dbReference type="InterPro" id="IPR006195">
    <property type="entry name" value="aa-tRNA-synth_II"/>
</dbReference>
<dbReference type="InterPro" id="IPR045864">
    <property type="entry name" value="aa-tRNA-synth_II/BPL/LPL"/>
</dbReference>
<dbReference type="InterPro" id="IPR004524">
    <property type="entry name" value="Asp-tRNA-ligase_1"/>
</dbReference>
<dbReference type="InterPro" id="IPR047089">
    <property type="entry name" value="Asp-tRNA-ligase_1_N"/>
</dbReference>
<dbReference type="InterPro" id="IPR002312">
    <property type="entry name" value="Asp/Asn-tRNA-synth_IIb"/>
</dbReference>
<dbReference type="InterPro" id="IPR047090">
    <property type="entry name" value="AspRS_core"/>
</dbReference>
<dbReference type="InterPro" id="IPR004115">
    <property type="entry name" value="GAD-like_sf"/>
</dbReference>
<dbReference type="InterPro" id="IPR029351">
    <property type="entry name" value="GAD_dom"/>
</dbReference>
<dbReference type="InterPro" id="IPR012340">
    <property type="entry name" value="NA-bd_OB-fold"/>
</dbReference>
<dbReference type="InterPro" id="IPR004365">
    <property type="entry name" value="NA-bd_OB_tRNA"/>
</dbReference>
<dbReference type="NCBIfam" id="TIGR00459">
    <property type="entry name" value="aspS_bact"/>
    <property type="match status" value="1"/>
</dbReference>
<dbReference type="NCBIfam" id="NF001750">
    <property type="entry name" value="PRK00476.1"/>
    <property type="match status" value="1"/>
</dbReference>
<dbReference type="PANTHER" id="PTHR22594:SF5">
    <property type="entry name" value="ASPARTATE--TRNA LIGASE, MITOCHONDRIAL"/>
    <property type="match status" value="1"/>
</dbReference>
<dbReference type="PANTHER" id="PTHR22594">
    <property type="entry name" value="ASPARTYL/LYSYL-TRNA SYNTHETASE"/>
    <property type="match status" value="1"/>
</dbReference>
<dbReference type="Pfam" id="PF02938">
    <property type="entry name" value="GAD"/>
    <property type="match status" value="1"/>
</dbReference>
<dbReference type="Pfam" id="PF00152">
    <property type="entry name" value="tRNA-synt_2"/>
    <property type="match status" value="1"/>
</dbReference>
<dbReference type="Pfam" id="PF01336">
    <property type="entry name" value="tRNA_anti-codon"/>
    <property type="match status" value="1"/>
</dbReference>
<dbReference type="PRINTS" id="PR01042">
    <property type="entry name" value="TRNASYNTHASP"/>
</dbReference>
<dbReference type="SUPFAM" id="SSF55681">
    <property type="entry name" value="Class II aaRS and biotin synthetases"/>
    <property type="match status" value="1"/>
</dbReference>
<dbReference type="SUPFAM" id="SSF55261">
    <property type="entry name" value="GAD domain-like"/>
    <property type="match status" value="1"/>
</dbReference>
<dbReference type="SUPFAM" id="SSF50249">
    <property type="entry name" value="Nucleic acid-binding proteins"/>
    <property type="match status" value="1"/>
</dbReference>
<dbReference type="PROSITE" id="PS50862">
    <property type="entry name" value="AA_TRNA_LIGASE_II"/>
    <property type="match status" value="1"/>
</dbReference>
<feature type="chain" id="PRO_1000202166" description="Aspartate--tRNA(Asp/Asn) ligase">
    <location>
        <begin position="1"/>
        <end position="602"/>
    </location>
</feature>
<feature type="region of interest" description="Aspartate" evidence="1">
    <location>
        <begin position="194"/>
        <end position="197"/>
    </location>
</feature>
<feature type="region of interest" description="Disordered" evidence="2">
    <location>
        <begin position="559"/>
        <end position="602"/>
    </location>
</feature>
<feature type="compositionally biased region" description="Basic and acidic residues" evidence="2">
    <location>
        <begin position="575"/>
        <end position="602"/>
    </location>
</feature>
<feature type="binding site" evidence="1">
    <location>
        <position position="170"/>
    </location>
    <ligand>
        <name>L-aspartate</name>
        <dbReference type="ChEBI" id="CHEBI:29991"/>
    </ligand>
</feature>
<feature type="binding site" evidence="1">
    <location>
        <begin position="216"/>
        <end position="218"/>
    </location>
    <ligand>
        <name>ATP</name>
        <dbReference type="ChEBI" id="CHEBI:30616"/>
    </ligand>
</feature>
<feature type="binding site" evidence="1">
    <location>
        <position position="216"/>
    </location>
    <ligand>
        <name>L-aspartate</name>
        <dbReference type="ChEBI" id="CHEBI:29991"/>
    </ligand>
</feature>
<feature type="binding site" evidence="1">
    <location>
        <position position="225"/>
    </location>
    <ligand>
        <name>ATP</name>
        <dbReference type="ChEBI" id="CHEBI:30616"/>
    </ligand>
</feature>
<feature type="binding site" evidence="1">
    <location>
        <position position="448"/>
    </location>
    <ligand>
        <name>L-aspartate</name>
        <dbReference type="ChEBI" id="CHEBI:29991"/>
    </ligand>
</feature>
<feature type="binding site" evidence="1">
    <location>
        <position position="482"/>
    </location>
    <ligand>
        <name>ATP</name>
        <dbReference type="ChEBI" id="CHEBI:30616"/>
    </ligand>
</feature>
<feature type="binding site" evidence="1">
    <location>
        <position position="489"/>
    </location>
    <ligand>
        <name>L-aspartate</name>
        <dbReference type="ChEBI" id="CHEBI:29991"/>
    </ligand>
</feature>
<feature type="binding site" evidence="1">
    <location>
        <begin position="534"/>
        <end position="537"/>
    </location>
    <ligand>
        <name>ATP</name>
        <dbReference type="ChEBI" id="CHEBI:30616"/>
    </ligand>
</feature>
<feature type="site" description="Important for tRNA non-discrimination" evidence="1">
    <location>
        <position position="31"/>
    </location>
</feature>
<feature type="site" description="Important for tRNA non-discrimination" evidence="1">
    <location>
        <position position="80"/>
    </location>
</feature>
<organism>
    <name type="scientific">Rhodococcus erythropolis (strain PR4 / NBRC 100887)</name>
    <dbReference type="NCBI Taxonomy" id="234621"/>
    <lineage>
        <taxon>Bacteria</taxon>
        <taxon>Bacillati</taxon>
        <taxon>Actinomycetota</taxon>
        <taxon>Actinomycetes</taxon>
        <taxon>Mycobacteriales</taxon>
        <taxon>Nocardiaceae</taxon>
        <taxon>Rhodococcus</taxon>
        <taxon>Rhodococcus erythropolis group</taxon>
    </lineage>
</organism>
<accession>C0ZZA3</accession>